<dbReference type="EMBL" id="DQ976509">
    <property type="protein sequence ID" value="ABM46740.1"/>
    <property type="molecule type" value="Genomic_DNA"/>
</dbReference>
<dbReference type="RefSeq" id="XP_004047535.1">
    <property type="nucleotide sequence ID" value="XM_004047487.5"/>
</dbReference>
<dbReference type="RefSeq" id="XP_004047537.1">
    <property type="nucleotide sequence ID" value="XM_004047489.5"/>
</dbReference>
<dbReference type="RefSeq" id="XP_063565531.1">
    <property type="nucleotide sequence ID" value="XM_063709461.1"/>
</dbReference>
<dbReference type="RefSeq" id="XP_063565532.1">
    <property type="nucleotide sequence ID" value="XM_063709462.1"/>
</dbReference>
<dbReference type="RefSeq" id="XP_063565533.1">
    <property type="nucleotide sequence ID" value="XM_063709463.1"/>
</dbReference>
<dbReference type="SMR" id="A1YF22"/>
<dbReference type="FunCoup" id="A1YF22">
    <property type="interactions" value="2411"/>
</dbReference>
<dbReference type="STRING" id="9593.ENSGGOP00000028407"/>
<dbReference type="Ensembl" id="ENSGGOT00000031553.2">
    <property type="protein sequence ID" value="ENSGGOP00000028407.1"/>
    <property type="gene ID" value="ENSGGOG00000028565.2"/>
</dbReference>
<dbReference type="GeneID" id="101147740"/>
<dbReference type="CTD" id="11244"/>
<dbReference type="eggNOG" id="ENOG502QT3D">
    <property type="taxonomic scope" value="Eukaryota"/>
</dbReference>
<dbReference type="GeneTree" id="ENSGT00950000182893"/>
<dbReference type="HOGENOM" id="CLU_009147_1_0_1"/>
<dbReference type="InParanoid" id="A1YF22"/>
<dbReference type="OMA" id="SSWGTFP"/>
<dbReference type="Proteomes" id="UP000001519">
    <property type="component" value="Chromosome 8"/>
</dbReference>
<dbReference type="Bgee" id="ENSGGOG00000028565">
    <property type="expression patterns" value="Expressed in cerebellum and 6 other cell types or tissues"/>
</dbReference>
<dbReference type="GO" id="GO:0005654">
    <property type="term" value="C:nucleoplasm"/>
    <property type="evidence" value="ECO:0007669"/>
    <property type="project" value="Ensembl"/>
</dbReference>
<dbReference type="GO" id="GO:0005634">
    <property type="term" value="C:nucleus"/>
    <property type="evidence" value="ECO:0000318"/>
    <property type="project" value="GO_Central"/>
</dbReference>
<dbReference type="GO" id="GO:0003677">
    <property type="term" value="F:DNA binding"/>
    <property type="evidence" value="ECO:0007669"/>
    <property type="project" value="UniProtKB-KW"/>
</dbReference>
<dbReference type="GO" id="GO:0000981">
    <property type="term" value="F:DNA-binding transcription factor activity, RNA polymerase II-specific"/>
    <property type="evidence" value="ECO:0000318"/>
    <property type="project" value="GO_Central"/>
</dbReference>
<dbReference type="GO" id="GO:0046982">
    <property type="term" value="F:protein heterodimerization activity"/>
    <property type="evidence" value="ECO:0007669"/>
    <property type="project" value="Ensembl"/>
</dbReference>
<dbReference type="GO" id="GO:0008270">
    <property type="term" value="F:zinc ion binding"/>
    <property type="evidence" value="ECO:0007669"/>
    <property type="project" value="UniProtKB-KW"/>
</dbReference>
<dbReference type="GO" id="GO:0000122">
    <property type="term" value="P:negative regulation of transcription by RNA polymerase II"/>
    <property type="evidence" value="ECO:0007669"/>
    <property type="project" value="Ensembl"/>
</dbReference>
<dbReference type="GO" id="GO:0006357">
    <property type="term" value="P:regulation of transcription by RNA polymerase II"/>
    <property type="evidence" value="ECO:0000318"/>
    <property type="project" value="GO_Central"/>
</dbReference>
<dbReference type="CDD" id="cd00086">
    <property type="entry name" value="homeodomain"/>
    <property type="match status" value="5"/>
</dbReference>
<dbReference type="FunFam" id="1.10.10.60:FF:000262">
    <property type="entry name" value="Zinc fingers and homeoboxes 1"/>
    <property type="match status" value="1"/>
</dbReference>
<dbReference type="FunFam" id="1.10.10.60:FF:000235">
    <property type="entry name" value="Zinc fingers and homeoboxes protein 1"/>
    <property type="match status" value="1"/>
</dbReference>
<dbReference type="FunFam" id="1.10.10.60:FF:000240">
    <property type="entry name" value="Zinc fingers and homeoboxes protein 1"/>
    <property type="match status" value="1"/>
</dbReference>
<dbReference type="FunFam" id="3.30.160.60:FF:000296">
    <property type="entry name" value="Zinc fingers and homeoboxes protein 1"/>
    <property type="match status" value="1"/>
</dbReference>
<dbReference type="FunFam" id="1.10.10.60:FF:000237">
    <property type="entry name" value="zinc fingers and homeoboxes protein 1"/>
    <property type="match status" value="1"/>
</dbReference>
<dbReference type="FunFam" id="1.10.10.60:FF:000133">
    <property type="entry name" value="zinc fingers and homeoboxes protein 3"/>
    <property type="match status" value="1"/>
</dbReference>
<dbReference type="Gene3D" id="3.30.160.60">
    <property type="entry name" value="Classic Zinc Finger"/>
    <property type="match status" value="1"/>
</dbReference>
<dbReference type="Gene3D" id="1.10.10.60">
    <property type="entry name" value="Homeodomain-like"/>
    <property type="match status" value="5"/>
</dbReference>
<dbReference type="InterPro" id="IPR001356">
    <property type="entry name" value="HD"/>
</dbReference>
<dbReference type="InterPro" id="IPR009057">
    <property type="entry name" value="Homeodomain-like_sf"/>
</dbReference>
<dbReference type="InterPro" id="IPR024578">
    <property type="entry name" value="Homez_homeobox_dom"/>
</dbReference>
<dbReference type="InterPro" id="IPR041057">
    <property type="entry name" value="ZHX_Znf_C2H2"/>
</dbReference>
<dbReference type="InterPro" id="IPR036236">
    <property type="entry name" value="Znf_C2H2_sf"/>
</dbReference>
<dbReference type="InterPro" id="IPR013087">
    <property type="entry name" value="Znf_C2H2_type"/>
</dbReference>
<dbReference type="PANTHER" id="PTHR15467:SF4">
    <property type="entry name" value="ZINC FINGERS AND HOMEOBOXES PROTEIN 1"/>
    <property type="match status" value="1"/>
</dbReference>
<dbReference type="PANTHER" id="PTHR15467">
    <property type="entry name" value="ZINC-FINGERS AND HOMEOBOXES RELATED"/>
    <property type="match status" value="1"/>
</dbReference>
<dbReference type="Pfam" id="PF00046">
    <property type="entry name" value="Homeodomain"/>
    <property type="match status" value="4"/>
</dbReference>
<dbReference type="Pfam" id="PF11569">
    <property type="entry name" value="Homez"/>
    <property type="match status" value="1"/>
</dbReference>
<dbReference type="Pfam" id="PF18387">
    <property type="entry name" value="zf_C2H2_ZHX"/>
    <property type="match status" value="1"/>
</dbReference>
<dbReference type="SMART" id="SM00389">
    <property type="entry name" value="HOX"/>
    <property type="match status" value="5"/>
</dbReference>
<dbReference type="SMART" id="SM00355">
    <property type="entry name" value="ZnF_C2H2"/>
    <property type="match status" value="2"/>
</dbReference>
<dbReference type="SUPFAM" id="SSF57667">
    <property type="entry name" value="beta-beta-alpha zinc fingers"/>
    <property type="match status" value="2"/>
</dbReference>
<dbReference type="SUPFAM" id="SSF46689">
    <property type="entry name" value="Homeodomain-like"/>
    <property type="match status" value="5"/>
</dbReference>
<dbReference type="PROSITE" id="PS50071">
    <property type="entry name" value="HOMEOBOX_2"/>
    <property type="match status" value="4"/>
</dbReference>
<dbReference type="PROSITE" id="PS50157">
    <property type="entry name" value="ZINC_FINGER_C2H2_2"/>
    <property type="match status" value="1"/>
</dbReference>
<keyword id="KW-0238">DNA-binding</keyword>
<keyword id="KW-0371">Homeobox</keyword>
<keyword id="KW-1017">Isopeptide bond</keyword>
<keyword id="KW-0479">Metal-binding</keyword>
<keyword id="KW-0539">Nucleus</keyword>
<keyword id="KW-0597">Phosphoprotein</keyword>
<keyword id="KW-1185">Reference proteome</keyword>
<keyword id="KW-0677">Repeat</keyword>
<keyword id="KW-0678">Repressor</keyword>
<keyword id="KW-0804">Transcription</keyword>
<keyword id="KW-0805">Transcription regulation</keyword>
<keyword id="KW-0832">Ubl conjugation</keyword>
<keyword id="KW-0862">Zinc</keyword>
<keyword id="KW-0863">Zinc-finger</keyword>
<gene>
    <name type="primary">ZHX1</name>
</gene>
<proteinExistence type="inferred from homology"/>
<feature type="chain" id="PRO_0000285460" description="Zinc fingers and homeoboxes protein 1">
    <location>
        <begin position="1"/>
        <end position="873"/>
    </location>
</feature>
<feature type="zinc finger region" description="C2H2-type 1" evidence="3">
    <location>
        <begin position="70"/>
        <end position="93"/>
    </location>
</feature>
<feature type="zinc finger region" description="C2H2-type 2" evidence="3">
    <location>
        <begin position="102"/>
        <end position="125"/>
    </location>
</feature>
<feature type="DNA-binding region" description="Homeobox 1" evidence="4">
    <location>
        <begin position="284"/>
        <end position="346"/>
    </location>
</feature>
<feature type="DNA-binding region" description="Homeobox 2" evidence="4">
    <location>
        <begin position="464"/>
        <end position="526"/>
    </location>
</feature>
<feature type="DNA-binding region" description="Homeobox 3" evidence="4">
    <location>
        <begin position="569"/>
        <end position="630"/>
    </location>
</feature>
<feature type="DNA-binding region" description="Homeobox 4" evidence="4">
    <location>
        <begin position="660"/>
        <end position="722"/>
    </location>
</feature>
<feature type="DNA-binding region" description="Homeobox 5" evidence="4">
    <location>
        <begin position="777"/>
        <end position="832"/>
    </location>
</feature>
<feature type="region of interest" description="Disordered" evidence="5">
    <location>
        <begin position="1"/>
        <end position="63"/>
    </location>
</feature>
<feature type="region of interest" description="Disordered" evidence="5">
    <location>
        <begin position="202"/>
        <end position="236"/>
    </location>
</feature>
<feature type="region of interest" description="Required for interaction with NFYA" evidence="1">
    <location>
        <begin position="272"/>
        <end position="564"/>
    </location>
</feature>
<feature type="region of interest" description="Required for dimerization" evidence="1">
    <location>
        <begin position="272"/>
        <end position="432"/>
    </location>
</feature>
<feature type="region of interest" description="Disordered" evidence="5">
    <location>
        <begin position="626"/>
        <end position="667"/>
    </location>
</feature>
<feature type="region of interest" description="Disordered" evidence="5">
    <location>
        <begin position="732"/>
        <end position="769"/>
    </location>
</feature>
<feature type="region of interest" description="Required for nuclear localization" evidence="1">
    <location>
        <begin position="734"/>
        <end position="768"/>
    </location>
</feature>
<feature type="region of interest" description="Disordered" evidence="5">
    <location>
        <begin position="829"/>
        <end position="873"/>
    </location>
</feature>
<feature type="region of interest" description="Required for repressor activity" evidence="1">
    <location>
        <begin position="831"/>
        <end position="873"/>
    </location>
</feature>
<feature type="compositionally biased region" description="Acidic residues" evidence="5">
    <location>
        <begin position="18"/>
        <end position="30"/>
    </location>
</feature>
<feature type="compositionally biased region" description="Basic and acidic residues" evidence="5">
    <location>
        <begin position="212"/>
        <end position="221"/>
    </location>
</feature>
<feature type="compositionally biased region" description="Low complexity" evidence="5">
    <location>
        <begin position="223"/>
        <end position="236"/>
    </location>
</feature>
<feature type="compositionally biased region" description="Basic residues" evidence="5">
    <location>
        <begin position="740"/>
        <end position="764"/>
    </location>
</feature>
<feature type="compositionally biased region" description="Acidic residues" evidence="5">
    <location>
        <begin position="831"/>
        <end position="857"/>
    </location>
</feature>
<feature type="compositionally biased region" description="Basic residues" evidence="5">
    <location>
        <begin position="863"/>
        <end position="873"/>
    </location>
</feature>
<feature type="modified residue" description="Phosphothreonine" evidence="2">
    <location>
        <position position="36"/>
    </location>
</feature>
<feature type="modified residue" description="Phosphoserine" evidence="2">
    <location>
        <position position="45"/>
    </location>
</feature>
<feature type="modified residue" description="Phosphoserine" evidence="2">
    <location>
        <position position="47"/>
    </location>
</feature>
<feature type="modified residue" description="Phosphoserine" evidence="2">
    <location>
        <position position="48"/>
    </location>
</feature>
<feature type="modified residue" description="Phosphoserine" evidence="2">
    <location>
        <position position="202"/>
    </location>
</feature>
<feature type="modified residue" description="Phosphoserine" evidence="2">
    <location>
        <position position="648"/>
    </location>
</feature>
<feature type="modified residue" description="Phosphoserine" evidence="2">
    <location>
        <position position="774"/>
    </location>
</feature>
<feature type="cross-link" description="Glycyl lysine isopeptide (Lys-Gly) (interchain with G-Cter in SUMO2)" evidence="2">
    <location>
        <position position="159"/>
    </location>
</feature>
<feature type="cross-link" description="Glycyl lysine isopeptide (Lys-Gly) (interchain with G-Cter in SUMO2)" evidence="2">
    <location>
        <position position="441"/>
    </location>
</feature>
<feature type="cross-link" description="Glycyl lysine isopeptide (Lys-Gly) (interchain with G-Cter in SUMO2)" evidence="2">
    <location>
        <position position="454"/>
    </location>
</feature>
<feature type="cross-link" description="Glycyl lysine isopeptide (Lys-Gly) (interchain with G-Cter in SUMO2)" evidence="2">
    <location>
        <position position="485"/>
    </location>
</feature>
<feature type="cross-link" description="Glycyl lysine isopeptide (Lys-Gly) (interchain with G-Cter in SUMO2)" evidence="2">
    <location>
        <position position="629"/>
    </location>
</feature>
<organism>
    <name type="scientific">Gorilla gorilla gorilla</name>
    <name type="common">Western lowland gorilla</name>
    <dbReference type="NCBI Taxonomy" id="9595"/>
    <lineage>
        <taxon>Eukaryota</taxon>
        <taxon>Metazoa</taxon>
        <taxon>Chordata</taxon>
        <taxon>Craniata</taxon>
        <taxon>Vertebrata</taxon>
        <taxon>Euteleostomi</taxon>
        <taxon>Mammalia</taxon>
        <taxon>Eutheria</taxon>
        <taxon>Euarchontoglires</taxon>
        <taxon>Primates</taxon>
        <taxon>Haplorrhini</taxon>
        <taxon>Catarrhini</taxon>
        <taxon>Hominidae</taxon>
        <taxon>Gorilla</taxon>
    </lineage>
</organism>
<evidence type="ECO:0000250" key="1"/>
<evidence type="ECO:0000250" key="2">
    <source>
        <dbReference type="UniProtKB" id="Q9UKY1"/>
    </source>
</evidence>
<evidence type="ECO:0000255" key="3">
    <source>
        <dbReference type="PROSITE-ProRule" id="PRU00042"/>
    </source>
</evidence>
<evidence type="ECO:0000255" key="4">
    <source>
        <dbReference type="PROSITE-ProRule" id="PRU00108"/>
    </source>
</evidence>
<evidence type="ECO:0000256" key="5">
    <source>
        <dbReference type="SAM" id="MobiDB-lite"/>
    </source>
</evidence>
<evidence type="ECO:0000305" key="6"/>
<sequence length="873" mass="98069">MASRRKSTTPCMVLASEQDPDLELISDLDEGPPVLTPVENSRAESISSDEEVHESVDSDNQQNKKVEGGYECKYCTFQTPDLNMFTFHVDSEHPNVVLNSSYVCVECNFLTKRYDALSEHNLKYHPGEENFKLTMVKRNNQTIFEQTINDLTFDGSFVKEENAEQAESTEVSSSGISISKTPIMKMMKNKVENKRIAVHHNSVEDVPEEKENEIKPDREEIVENPSSSASESNTSTSIVNRIHPSTASTVVTPAAVLPGLAQVITAVSAQQNSNLIPKVLIPVNSIPTYNAALDNNPLLLNTYNKFPYPTMSEITVLSAQAKYTEEQIKIWFSAQRLKHGVSWTPEEVEEARRKQFNGTVHTVPQTITVIPTHISTGSNGLPSILQTCQIVGQPGLVLTQVAGTNTLPVTAPIALTVAGIPSQNNVQKSQVPAAQPTAETKPATAAVPTSQSVKHETALVNPDSFGIRAKKTKEQLAELKVSYLKNQFPHDSEIIRLMKITGLTKGEIKKWFSDTRYNQRNSKSNQCLHLNNDSSTTIIIDSSDETTESPTVGTAQPKQSWNPFPDFTPQKFKEKTAEQLRVLQASFLNSSVLTDEELNRLRAQTKLTRREIDAWFTEKKKSKALKEEKMEIDESNAGSSKEEAGETSPGDESGAPKSGSTGKICKKTPEQLHMLKSAFVRTQWPSPEEYDKLAKESGLARTDIVSWFGDTRYAWKNGNLKWYYYYQSANSSSMNGLSSLRKRGRGRPKGRGRGRPRGRPRGSKRINNWDRGPSLIKFKTGTAILKDYYLKHKFLNEQDLDELVNKSHMGYEQVREWFAERQRRSELGIELFEENEEEDEVIDDQEEDEEETDDSDTWEPPRHVKRKLSKSDD</sequence>
<accession>A1YF22</accession>
<reference key="1">
    <citation type="submission" date="2006-08" db="EMBL/GenBank/DDBJ databases">
        <title>Positive selection in transcription factor genes on the human lineage.</title>
        <authorList>
            <person name="Nickel G.C."/>
            <person name="Tefft D.L."/>
            <person name="Trevarthen K."/>
            <person name="Funt J."/>
            <person name="Adams M.D."/>
        </authorList>
    </citation>
    <scope>NUCLEOTIDE SEQUENCE [GENOMIC DNA]</scope>
</reference>
<comment type="function">
    <text evidence="1">Acts as a transcriptional repressor.</text>
</comment>
<comment type="subunit">
    <text evidence="1">Forms homodimers. Also forms heterodimers with ZHX3 which is a prerequisite for repressor activity and with ZHX2. Interacts with NFYA. Interacts with ATF7IP (By similarity).</text>
</comment>
<comment type="subcellular location">
    <subcellularLocation>
        <location evidence="4">Nucleus</location>
    </subcellularLocation>
</comment>
<comment type="similarity">
    <text evidence="6">Belongs to the ZHX family.</text>
</comment>
<name>ZHX1_GORGO</name>
<protein>
    <recommendedName>
        <fullName>Zinc fingers and homeoboxes protein 1</fullName>
    </recommendedName>
</protein>